<organism>
    <name type="scientific">Thermotoga sp. (strain RQ2)</name>
    <dbReference type="NCBI Taxonomy" id="126740"/>
    <lineage>
        <taxon>Bacteria</taxon>
        <taxon>Thermotogati</taxon>
        <taxon>Thermotogota</taxon>
        <taxon>Thermotogae</taxon>
        <taxon>Thermotogales</taxon>
        <taxon>Thermotogaceae</taxon>
        <taxon>Thermotoga</taxon>
    </lineage>
</organism>
<reference key="1">
    <citation type="journal article" date="2011" name="J. Bacteriol.">
        <title>Genome sequence of Thermotoga sp. strain RQ2, a hyperthermophilic bacterium isolated from a geothermally heated region of the seafloor near Ribeira Quente, the Azores.</title>
        <authorList>
            <person name="Swithers K.S."/>
            <person name="DiPippo J.L."/>
            <person name="Bruce D.C."/>
            <person name="Detter C."/>
            <person name="Tapia R."/>
            <person name="Han S."/>
            <person name="Saunders E."/>
            <person name="Goodwin L.A."/>
            <person name="Han J."/>
            <person name="Woyke T."/>
            <person name="Pitluck S."/>
            <person name="Pennacchio L."/>
            <person name="Nolan M."/>
            <person name="Mikhailova N."/>
            <person name="Lykidis A."/>
            <person name="Land M.L."/>
            <person name="Brettin T."/>
            <person name="Stetter K.O."/>
            <person name="Nelson K.E."/>
            <person name="Gogarten J.P."/>
            <person name="Noll K.M."/>
        </authorList>
    </citation>
    <scope>NUCLEOTIDE SEQUENCE [LARGE SCALE GENOMIC DNA]</scope>
    <source>
        <strain>RQ2</strain>
    </source>
</reference>
<name>Y1144_THESQ</name>
<comment type="similarity">
    <text evidence="1">Belongs to the RemA family.</text>
</comment>
<protein>
    <recommendedName>
        <fullName evidence="1">Putative regulatory protein TRQ2_1144</fullName>
    </recommendedName>
</protein>
<proteinExistence type="inferred from homology"/>
<feature type="chain" id="PRO_1000146094" description="Putative regulatory protein TRQ2_1144">
    <location>
        <begin position="1"/>
        <end position="92"/>
    </location>
</feature>
<gene>
    <name type="ordered locus">TRQ2_1144</name>
</gene>
<evidence type="ECO:0000255" key="1">
    <source>
        <dbReference type="HAMAP-Rule" id="MF_01503"/>
    </source>
</evidence>
<accession>B1LAZ1</accession>
<sequence>MYGLINIGFGNVVAGDRVIAIVNPESSPLKRMKDEAKLEGKLIDATYGRKTRSIIITDSNHIILSAIQPETIAQRFMENFYEIERVLRETKK</sequence>
<dbReference type="EMBL" id="CP000969">
    <property type="protein sequence ID" value="ACB09489.1"/>
    <property type="molecule type" value="Genomic_DNA"/>
</dbReference>
<dbReference type="RefSeq" id="WP_004082206.1">
    <property type="nucleotide sequence ID" value="NC_010483.1"/>
</dbReference>
<dbReference type="SMR" id="B1LAZ1"/>
<dbReference type="KEGG" id="trq:TRQ2_1144"/>
<dbReference type="HOGENOM" id="CLU_165326_0_0_0"/>
<dbReference type="Proteomes" id="UP000001687">
    <property type="component" value="Chromosome"/>
</dbReference>
<dbReference type="HAMAP" id="MF_01503">
    <property type="entry name" value="RemA"/>
    <property type="match status" value="1"/>
</dbReference>
<dbReference type="InterPro" id="IPR007169">
    <property type="entry name" value="RemA-like"/>
</dbReference>
<dbReference type="NCBIfam" id="NF003315">
    <property type="entry name" value="PRK04323.1"/>
    <property type="match status" value="1"/>
</dbReference>
<dbReference type="PANTHER" id="PTHR38449:SF1">
    <property type="entry name" value="REGULATORY PROTEIN SSL2874-RELATED"/>
    <property type="match status" value="1"/>
</dbReference>
<dbReference type="PANTHER" id="PTHR38449">
    <property type="entry name" value="REGULATORY PROTEIN TM_1690-RELATED"/>
    <property type="match status" value="1"/>
</dbReference>
<dbReference type="Pfam" id="PF04025">
    <property type="entry name" value="RemA-like"/>
    <property type="match status" value="1"/>
</dbReference>